<dbReference type="EMBL" id="AE005174">
    <property type="protein sequence ID" value="AAG57638.1"/>
    <property type="molecule type" value="Genomic_DNA"/>
</dbReference>
<dbReference type="EMBL" id="BA000007">
    <property type="protein sequence ID" value="BAB36813.1"/>
    <property type="molecule type" value="Genomic_DNA"/>
</dbReference>
<dbReference type="PIR" id="B85897">
    <property type="entry name" value="B85897"/>
</dbReference>
<dbReference type="PIR" id="F91052">
    <property type="entry name" value="F91052"/>
</dbReference>
<dbReference type="RefSeq" id="NP_311417.1">
    <property type="nucleotide sequence ID" value="NC_002695.1"/>
</dbReference>
<dbReference type="RefSeq" id="WP_000523616.1">
    <property type="nucleotide sequence ID" value="NZ_VOAI01000001.1"/>
</dbReference>
<dbReference type="BMRB" id="P0C0M0"/>
<dbReference type="SMR" id="P0C0M0"/>
<dbReference type="DIP" id="DIP-58578N"/>
<dbReference type="IntAct" id="P0C0M0">
    <property type="interactions" value="2"/>
</dbReference>
<dbReference type="STRING" id="155864.Z3791"/>
<dbReference type="GeneID" id="913777"/>
<dbReference type="GeneID" id="93774612"/>
<dbReference type="KEGG" id="ece:Z3791"/>
<dbReference type="KEGG" id="ecs:ECs_3390"/>
<dbReference type="PATRIC" id="fig|386585.9.peg.3541"/>
<dbReference type="eggNOG" id="COG2975">
    <property type="taxonomic scope" value="Bacteria"/>
</dbReference>
<dbReference type="HOGENOM" id="CLU_168040_1_0_6"/>
<dbReference type="OMA" id="AIQQAWI"/>
<dbReference type="Proteomes" id="UP000000558">
    <property type="component" value="Chromosome"/>
</dbReference>
<dbReference type="Proteomes" id="UP000002519">
    <property type="component" value="Chromosome"/>
</dbReference>
<dbReference type="GO" id="GO:0005829">
    <property type="term" value="C:cytosol"/>
    <property type="evidence" value="ECO:0007669"/>
    <property type="project" value="TreeGrafter"/>
</dbReference>
<dbReference type="GO" id="GO:0008198">
    <property type="term" value="F:ferrous iron binding"/>
    <property type="evidence" value="ECO:0007669"/>
    <property type="project" value="TreeGrafter"/>
</dbReference>
<dbReference type="GO" id="GO:0016226">
    <property type="term" value="P:iron-sulfur cluster assembly"/>
    <property type="evidence" value="ECO:0007669"/>
    <property type="project" value="InterPro"/>
</dbReference>
<dbReference type="FunFam" id="1.10.10.600:FF:000001">
    <property type="entry name" value="Fe-S assembly protein IscX"/>
    <property type="match status" value="1"/>
</dbReference>
<dbReference type="Gene3D" id="1.10.10.600">
    <property type="entry name" value="IscX-like"/>
    <property type="match status" value="1"/>
</dbReference>
<dbReference type="InterPro" id="IPR007479">
    <property type="entry name" value="ISC_FeS_clus_asmbl_IscsX"/>
</dbReference>
<dbReference type="InterPro" id="IPR036762">
    <property type="entry name" value="IscX-like_sf"/>
</dbReference>
<dbReference type="NCBIfam" id="TIGR03412">
    <property type="entry name" value="iscX_yfhJ"/>
    <property type="match status" value="1"/>
</dbReference>
<dbReference type="PANTHER" id="PTHR37532">
    <property type="entry name" value="PROTEIN ISCX"/>
    <property type="match status" value="1"/>
</dbReference>
<dbReference type="PANTHER" id="PTHR37532:SF1">
    <property type="entry name" value="PROTEIN ISCX"/>
    <property type="match status" value="1"/>
</dbReference>
<dbReference type="Pfam" id="PF04384">
    <property type="entry name" value="Fe-S_assembly"/>
    <property type="match status" value="1"/>
</dbReference>
<dbReference type="PIRSF" id="PIRSF039003">
    <property type="entry name" value="IscX"/>
    <property type="match status" value="1"/>
</dbReference>
<dbReference type="SUPFAM" id="SSF140319">
    <property type="entry name" value="IscX-like"/>
    <property type="match status" value="1"/>
</dbReference>
<gene>
    <name type="primary">iscX</name>
    <name type="ordered locus">Z3791</name>
    <name type="ordered locus">ECs3390</name>
</gene>
<comment type="function">
    <text evidence="1">May function as iron donor in the assembly of iron-sulfur clusters.</text>
</comment>
<comment type="subunit">
    <text evidence="1 2">Monomer (By similarity). Binds IscS; certain pairs of proteins can bind simultaneously to IscS; IscS-IscU-CyaY and IscS-IscU-IscX complexes can be isolated in vitro, but others (IscS-IscX-TusA) cannot.</text>
</comment>
<comment type="interaction">
    <interactant intactId="EBI-15849987">
        <id>P0C0M0</id>
    </interactant>
    <interactant intactId="EBI-9011195">
        <id>P0A6B9</id>
        <label>iscS</label>
    </interactant>
    <organismsDiffer>false</organismsDiffer>
    <experiments>2</experiments>
</comment>
<comment type="similarity">
    <text evidence="3">Belongs to the IscX family.</text>
</comment>
<reference key="1">
    <citation type="journal article" date="2001" name="Nature">
        <title>Genome sequence of enterohaemorrhagic Escherichia coli O157:H7.</title>
        <authorList>
            <person name="Perna N.T."/>
            <person name="Plunkett G. III"/>
            <person name="Burland V."/>
            <person name="Mau B."/>
            <person name="Glasner J.D."/>
            <person name="Rose D.J."/>
            <person name="Mayhew G.F."/>
            <person name="Evans P.S."/>
            <person name="Gregor J."/>
            <person name="Kirkpatrick H.A."/>
            <person name="Posfai G."/>
            <person name="Hackett J."/>
            <person name="Klink S."/>
            <person name="Boutin A."/>
            <person name="Shao Y."/>
            <person name="Miller L."/>
            <person name="Grotbeck E.J."/>
            <person name="Davis N.W."/>
            <person name="Lim A."/>
            <person name="Dimalanta E.T."/>
            <person name="Potamousis K."/>
            <person name="Apodaca J."/>
            <person name="Anantharaman T.S."/>
            <person name="Lin J."/>
            <person name="Yen G."/>
            <person name="Schwartz D.C."/>
            <person name="Welch R.A."/>
            <person name="Blattner F.R."/>
        </authorList>
    </citation>
    <scope>NUCLEOTIDE SEQUENCE [LARGE SCALE GENOMIC DNA]</scope>
    <source>
        <strain>O157:H7 / EDL933 / ATCC 700927 / EHEC</strain>
    </source>
</reference>
<reference key="2">
    <citation type="journal article" date="2001" name="DNA Res.">
        <title>Complete genome sequence of enterohemorrhagic Escherichia coli O157:H7 and genomic comparison with a laboratory strain K-12.</title>
        <authorList>
            <person name="Hayashi T."/>
            <person name="Makino K."/>
            <person name="Ohnishi M."/>
            <person name="Kurokawa K."/>
            <person name="Ishii K."/>
            <person name="Yokoyama K."/>
            <person name="Han C.-G."/>
            <person name="Ohtsubo E."/>
            <person name="Nakayama K."/>
            <person name="Murata T."/>
            <person name="Tanaka M."/>
            <person name="Tobe T."/>
            <person name="Iida T."/>
            <person name="Takami H."/>
            <person name="Honda T."/>
            <person name="Sasakawa C."/>
            <person name="Ogasawara N."/>
            <person name="Yasunaga T."/>
            <person name="Kuhara S."/>
            <person name="Shiba T."/>
            <person name="Hattori M."/>
            <person name="Shinagawa H."/>
        </authorList>
    </citation>
    <scope>NUCLEOTIDE SEQUENCE [LARGE SCALE GENOMIC DNA]</scope>
    <source>
        <strain>O157:H7 / Sakai / RIMD 0509952 / EHEC</strain>
    </source>
</reference>
<reference key="3">
    <citation type="journal article" date="2010" name="PLoS Biol.">
        <title>Structural basis for Fe-S cluster assembly and tRNA thiolation mediated by IscS protein-protein interactions.</title>
        <authorList>
            <person name="Shi R."/>
            <person name="Proteau A."/>
            <person name="Villarroya M."/>
            <person name="Moukadiri I."/>
            <person name="Zhang L."/>
            <person name="Trempe J.F."/>
            <person name="Matte A."/>
            <person name="Armengod M.E."/>
            <person name="Cygler M."/>
        </authorList>
    </citation>
    <scope>INTERACTION WITH CYAY; ISCS AND ISCU</scope>
    <scope>SUBUNIT</scope>
    <source>
        <strain>O157:H7 / EDL933 / ATCC 700927 / EHEC</strain>
    </source>
</reference>
<accession>P0C0M0</accession>
<accession>P37096</accession>
<organism>
    <name type="scientific">Escherichia coli O157:H7</name>
    <dbReference type="NCBI Taxonomy" id="83334"/>
    <lineage>
        <taxon>Bacteria</taxon>
        <taxon>Pseudomonadati</taxon>
        <taxon>Pseudomonadota</taxon>
        <taxon>Gammaproteobacteria</taxon>
        <taxon>Enterobacterales</taxon>
        <taxon>Enterobacteriaceae</taxon>
        <taxon>Escherichia</taxon>
    </lineage>
</organism>
<sequence>MGLKWTDSREIGEALYDAYPDLDPKTVRFTDMHQWICDLEDFDDDPQASNEKILEAILLVWLDEAE</sequence>
<protein>
    <recommendedName>
        <fullName>Protein IscX</fullName>
    </recommendedName>
</protein>
<evidence type="ECO:0000250" key="1"/>
<evidence type="ECO:0000269" key="2">
    <source>
    </source>
</evidence>
<evidence type="ECO:0000305" key="3"/>
<feature type="chain" id="PRO_0000211854" description="Protein IscX">
    <location>
        <begin position="1"/>
        <end position="66"/>
    </location>
</feature>
<name>ISCX_ECO57</name>
<keyword id="KW-1185">Reference proteome</keyword>
<proteinExistence type="evidence at protein level"/>